<accession>Q31AX5</accession>
<sequence length="527" mass="59161">MNEELNSWDKFCNYLWFDKKLNIWLDISKIIFTNDDIVTLEEKFTDVLSSIKELENGAISNIDENRQVGHYWLRNPSISPSSNIGEEISADINEISEFGKQILNGNIKNKNNQKYTDVLWIGIGGSGLGPLLITESLQKCSKGLNFSYIDNVDPFLISEKLEELAEKLSTTLFVVVSKSGGTPEPRIAMEIIKSHCENNSLEWNSNAIAITMKDSKLFNKAISENWLKIFNLQDWVGGRTSITSSVGLLPLALINENIFEFIRGASLMDEATRTSDFKNNPAALLSSAWYLTGDGVGKRDMVVLPYRDRLQVFSKYLQQLVMESLGKKFNRNGEVVNQGISVFGNKGSTDQHAYVQQLRDGIDNFFCIFIELLDSPSTNIFDGKENPKEYLSGFLQGTRSALSSENRQSITITLEKLNCFSLGALIALFERSVSFYAELVNINAYDQPGVEAGKKAAANIIDYQQKVSNLLEKGGEYSINEITSLIDNSVSEPIFFILREMCFGNEDYLVKGDWSNPNSLVIQKRNS</sequence>
<keyword id="KW-0963">Cytoplasm</keyword>
<keyword id="KW-0312">Gluconeogenesis</keyword>
<keyword id="KW-0324">Glycolysis</keyword>
<keyword id="KW-0413">Isomerase</keyword>
<organism>
    <name type="scientific">Prochlorococcus marinus (strain MIT 9312)</name>
    <dbReference type="NCBI Taxonomy" id="74546"/>
    <lineage>
        <taxon>Bacteria</taxon>
        <taxon>Bacillati</taxon>
        <taxon>Cyanobacteriota</taxon>
        <taxon>Cyanophyceae</taxon>
        <taxon>Synechococcales</taxon>
        <taxon>Prochlorococcaceae</taxon>
        <taxon>Prochlorococcus</taxon>
    </lineage>
</organism>
<gene>
    <name evidence="1" type="primary">pgi</name>
    <name type="ordered locus">PMT9312_0910</name>
</gene>
<comment type="function">
    <text evidence="1">Catalyzes the reversible isomerization of glucose-6-phosphate to fructose-6-phosphate.</text>
</comment>
<comment type="catalytic activity">
    <reaction evidence="1">
        <text>alpha-D-glucose 6-phosphate = beta-D-fructose 6-phosphate</text>
        <dbReference type="Rhea" id="RHEA:11816"/>
        <dbReference type="ChEBI" id="CHEBI:57634"/>
        <dbReference type="ChEBI" id="CHEBI:58225"/>
        <dbReference type="EC" id="5.3.1.9"/>
    </reaction>
</comment>
<comment type="pathway">
    <text evidence="1">Carbohydrate biosynthesis; gluconeogenesis.</text>
</comment>
<comment type="pathway">
    <text evidence="1">Carbohydrate degradation; glycolysis; D-glyceraldehyde 3-phosphate and glycerone phosphate from D-glucose: step 2/4.</text>
</comment>
<comment type="subcellular location">
    <subcellularLocation>
        <location evidence="1">Cytoplasm</location>
    </subcellularLocation>
</comment>
<comment type="similarity">
    <text evidence="1">Belongs to the GPI family.</text>
</comment>
<protein>
    <recommendedName>
        <fullName evidence="1">Glucose-6-phosphate isomerase</fullName>
        <shortName evidence="1">GPI</shortName>
        <ecNumber evidence="1">5.3.1.9</ecNumber>
    </recommendedName>
    <alternativeName>
        <fullName evidence="1">Phosphoglucose isomerase</fullName>
        <shortName evidence="1">PGI</shortName>
    </alternativeName>
    <alternativeName>
        <fullName evidence="1">Phosphohexose isomerase</fullName>
        <shortName evidence="1">PHI</shortName>
    </alternativeName>
</protein>
<proteinExistence type="inferred from homology"/>
<dbReference type="EC" id="5.3.1.9" evidence="1"/>
<dbReference type="EMBL" id="CP000111">
    <property type="protein sequence ID" value="ABB49970.1"/>
    <property type="molecule type" value="Genomic_DNA"/>
</dbReference>
<dbReference type="RefSeq" id="WP_011376464.1">
    <property type="nucleotide sequence ID" value="NC_007577.1"/>
</dbReference>
<dbReference type="SMR" id="Q31AX5"/>
<dbReference type="STRING" id="74546.PMT9312_0910"/>
<dbReference type="KEGG" id="pmi:PMT9312_0910"/>
<dbReference type="eggNOG" id="COG0166">
    <property type="taxonomic scope" value="Bacteria"/>
</dbReference>
<dbReference type="HOGENOM" id="CLU_033288_0_0_3"/>
<dbReference type="OrthoDB" id="140919at2"/>
<dbReference type="UniPathway" id="UPA00109">
    <property type="reaction ID" value="UER00181"/>
</dbReference>
<dbReference type="UniPathway" id="UPA00138"/>
<dbReference type="Proteomes" id="UP000002715">
    <property type="component" value="Chromosome"/>
</dbReference>
<dbReference type="GO" id="GO:0005829">
    <property type="term" value="C:cytosol"/>
    <property type="evidence" value="ECO:0007669"/>
    <property type="project" value="TreeGrafter"/>
</dbReference>
<dbReference type="GO" id="GO:0097367">
    <property type="term" value="F:carbohydrate derivative binding"/>
    <property type="evidence" value="ECO:0007669"/>
    <property type="project" value="InterPro"/>
</dbReference>
<dbReference type="GO" id="GO:0004347">
    <property type="term" value="F:glucose-6-phosphate isomerase activity"/>
    <property type="evidence" value="ECO:0007669"/>
    <property type="project" value="UniProtKB-UniRule"/>
</dbReference>
<dbReference type="GO" id="GO:0048029">
    <property type="term" value="F:monosaccharide binding"/>
    <property type="evidence" value="ECO:0007669"/>
    <property type="project" value="TreeGrafter"/>
</dbReference>
<dbReference type="GO" id="GO:0006094">
    <property type="term" value="P:gluconeogenesis"/>
    <property type="evidence" value="ECO:0007669"/>
    <property type="project" value="UniProtKB-UniRule"/>
</dbReference>
<dbReference type="GO" id="GO:0051156">
    <property type="term" value="P:glucose 6-phosphate metabolic process"/>
    <property type="evidence" value="ECO:0007669"/>
    <property type="project" value="TreeGrafter"/>
</dbReference>
<dbReference type="GO" id="GO:0006096">
    <property type="term" value="P:glycolytic process"/>
    <property type="evidence" value="ECO:0007669"/>
    <property type="project" value="UniProtKB-UniRule"/>
</dbReference>
<dbReference type="CDD" id="cd05015">
    <property type="entry name" value="SIS_PGI_1"/>
    <property type="match status" value="1"/>
</dbReference>
<dbReference type="CDD" id="cd05016">
    <property type="entry name" value="SIS_PGI_2"/>
    <property type="match status" value="1"/>
</dbReference>
<dbReference type="FunFam" id="3.40.50.10490:FF:000021">
    <property type="entry name" value="Glucose-6-phosphate isomerase"/>
    <property type="match status" value="1"/>
</dbReference>
<dbReference type="Gene3D" id="3.40.50.10490">
    <property type="entry name" value="Glucose-6-phosphate isomerase like protein, domain 1"/>
    <property type="match status" value="3"/>
</dbReference>
<dbReference type="HAMAP" id="MF_00473">
    <property type="entry name" value="G6P_isomerase"/>
    <property type="match status" value="1"/>
</dbReference>
<dbReference type="InterPro" id="IPR001672">
    <property type="entry name" value="G6P_Isomerase"/>
</dbReference>
<dbReference type="InterPro" id="IPR018189">
    <property type="entry name" value="Phosphoglucose_isomerase_CS"/>
</dbReference>
<dbReference type="InterPro" id="IPR046348">
    <property type="entry name" value="SIS_dom_sf"/>
</dbReference>
<dbReference type="InterPro" id="IPR035476">
    <property type="entry name" value="SIS_PGI_1"/>
</dbReference>
<dbReference type="InterPro" id="IPR035482">
    <property type="entry name" value="SIS_PGI_2"/>
</dbReference>
<dbReference type="NCBIfam" id="NF010696">
    <property type="entry name" value="PRK14096.1"/>
    <property type="match status" value="1"/>
</dbReference>
<dbReference type="PANTHER" id="PTHR11469">
    <property type="entry name" value="GLUCOSE-6-PHOSPHATE ISOMERASE"/>
    <property type="match status" value="1"/>
</dbReference>
<dbReference type="PANTHER" id="PTHR11469:SF1">
    <property type="entry name" value="GLUCOSE-6-PHOSPHATE ISOMERASE"/>
    <property type="match status" value="1"/>
</dbReference>
<dbReference type="Pfam" id="PF00342">
    <property type="entry name" value="PGI"/>
    <property type="match status" value="2"/>
</dbReference>
<dbReference type="PRINTS" id="PR00662">
    <property type="entry name" value="G6PISOMERASE"/>
</dbReference>
<dbReference type="SUPFAM" id="SSF53697">
    <property type="entry name" value="SIS domain"/>
    <property type="match status" value="1"/>
</dbReference>
<dbReference type="PROSITE" id="PS00174">
    <property type="entry name" value="P_GLUCOSE_ISOMERASE_2"/>
    <property type="match status" value="1"/>
</dbReference>
<dbReference type="PROSITE" id="PS51463">
    <property type="entry name" value="P_GLUCOSE_ISOMERASE_3"/>
    <property type="match status" value="1"/>
</dbReference>
<reference key="1">
    <citation type="journal article" date="2006" name="Science">
        <title>Genomic islands and the ecology and evolution of Prochlorococcus.</title>
        <authorList>
            <person name="Coleman M.L."/>
            <person name="Sullivan M.B."/>
            <person name="Martiny A.C."/>
            <person name="Steglich C."/>
            <person name="Barry K."/>
            <person name="Delong E.F."/>
            <person name="Chisholm S.W."/>
        </authorList>
    </citation>
    <scope>NUCLEOTIDE SEQUENCE [LARGE SCALE GENOMIC DNA]</scope>
    <source>
        <strain>MIT 9312</strain>
    </source>
</reference>
<feature type="chain" id="PRO_0000230925" description="Glucose-6-phosphate isomerase">
    <location>
        <begin position="1"/>
        <end position="527"/>
    </location>
</feature>
<feature type="active site" description="Proton donor" evidence="1">
    <location>
        <position position="323"/>
    </location>
</feature>
<feature type="active site" evidence="1">
    <location>
        <position position="352"/>
    </location>
</feature>
<feature type="active site" evidence="1">
    <location>
        <position position="454"/>
    </location>
</feature>
<evidence type="ECO:0000255" key="1">
    <source>
        <dbReference type="HAMAP-Rule" id="MF_00473"/>
    </source>
</evidence>
<name>G6PI_PROM9</name>